<sequence length="808" mass="94135">MSSVRAQFAEVQEQLNQVHSLVDSNTPSDLNKAATILKSLLPVYKDLSGNEESKRPENLEILKEIKSRLTEETQRVMSKKEEAKSLQIQQQQQQQQLLQQQQQQQILESTTRNRQASQQELPKPPILSGYLKKQGDKGLVRSFKKRWFLQRDTKLFYYEKEGDSEPYGFVNLPEMINVKTVDSGFELATPSRVYVFQVFKPSDLTYWTEGLKEFKKYYQSLQNSQKFGANANGNGNSSPNMSSSGSYSDFRKYSESSQQPLNSSTGAINTTPQRGTPIKDRRGTVSGGTTEYSHSSSSTAPDSPTLSSSYVPPPSSSNLNPQDEELKRRENEIIRKHQEKLKQQDDQQQDDKQQQQQQSQEPPQQQQQQQEQLQSQPSQQQQQQQQQQQQQQQQQQQQQQQQQQQQQQQQQQPPQTSPQNSRHGSTNYSQLQQQQQQPQQQPQQQSSPQVIISNNNSPRFESQQQQNNFHNNGSNINLESFRQSIEDELNKKFLKEKQDLMEFEIKKRLEIESEIKKLQLQLDQTKTDAEEKQNKSSNELKKKKAEIEDYEARVTIITKRNEEMDAKIKELESSRPVETFPHEFLWTEEVNSRDLLIASQSKRILELEEQLKLKDNAVTVIKRENEMLRQETEKKDKYINELLEKGGGSGIHTNSNNNNNSNNNNNNSNNNSNTDKIKESMVAHQTQNAFLLQEIQRLETQSQFKLDIKIQQIEELENQLEQQLYQFHRFREAIIGTMSNEYCVKIEKENLDVKKEYFQSLGVSIKLHRVKEGYFANIDINSLFDKVIKENVHYRNWPEWISNQFNQA</sequence>
<gene>
    <name type="ORF">DDB_G0275795</name>
</gene>
<protein>
    <recommendedName>
        <fullName>PH domain-containing protein DDB_G0275795</fullName>
    </recommendedName>
</protein>
<proteinExistence type="predicted"/>
<reference key="1">
    <citation type="journal article" date="2002" name="Nature">
        <title>Sequence and analysis of chromosome 2 of Dictyostelium discoideum.</title>
        <authorList>
            <person name="Gloeckner G."/>
            <person name="Eichinger L."/>
            <person name="Szafranski K."/>
            <person name="Pachebat J.A."/>
            <person name="Bankier A.T."/>
            <person name="Dear P.H."/>
            <person name="Lehmann R."/>
            <person name="Baumgart C."/>
            <person name="Parra G."/>
            <person name="Abril J.F."/>
            <person name="Guigo R."/>
            <person name="Kumpf K."/>
            <person name="Tunggal B."/>
            <person name="Cox E.C."/>
            <person name="Quail M.A."/>
            <person name="Platzer M."/>
            <person name="Rosenthal A."/>
            <person name="Noegel A.A."/>
        </authorList>
    </citation>
    <scope>NUCLEOTIDE SEQUENCE [LARGE SCALE GENOMIC DNA]</scope>
    <source>
        <strain>AX4</strain>
    </source>
</reference>
<reference key="2">
    <citation type="journal article" date="2005" name="Nature">
        <title>The genome of the social amoeba Dictyostelium discoideum.</title>
        <authorList>
            <person name="Eichinger L."/>
            <person name="Pachebat J.A."/>
            <person name="Gloeckner G."/>
            <person name="Rajandream M.A."/>
            <person name="Sucgang R."/>
            <person name="Berriman M."/>
            <person name="Song J."/>
            <person name="Olsen R."/>
            <person name="Szafranski K."/>
            <person name="Xu Q."/>
            <person name="Tunggal B."/>
            <person name="Kummerfeld S."/>
            <person name="Madera M."/>
            <person name="Konfortov B.A."/>
            <person name="Rivero F."/>
            <person name="Bankier A.T."/>
            <person name="Lehmann R."/>
            <person name="Hamlin N."/>
            <person name="Davies R."/>
            <person name="Gaudet P."/>
            <person name="Fey P."/>
            <person name="Pilcher K."/>
            <person name="Chen G."/>
            <person name="Saunders D."/>
            <person name="Sodergren E.J."/>
            <person name="Davis P."/>
            <person name="Kerhornou A."/>
            <person name="Nie X."/>
            <person name="Hall N."/>
            <person name="Anjard C."/>
            <person name="Hemphill L."/>
            <person name="Bason N."/>
            <person name="Farbrother P."/>
            <person name="Desany B."/>
            <person name="Just E."/>
            <person name="Morio T."/>
            <person name="Rost R."/>
            <person name="Churcher C.M."/>
            <person name="Cooper J."/>
            <person name="Haydock S."/>
            <person name="van Driessche N."/>
            <person name="Cronin A."/>
            <person name="Goodhead I."/>
            <person name="Muzny D.M."/>
            <person name="Mourier T."/>
            <person name="Pain A."/>
            <person name="Lu M."/>
            <person name="Harper D."/>
            <person name="Lindsay R."/>
            <person name="Hauser H."/>
            <person name="James K.D."/>
            <person name="Quiles M."/>
            <person name="Madan Babu M."/>
            <person name="Saito T."/>
            <person name="Buchrieser C."/>
            <person name="Wardroper A."/>
            <person name="Felder M."/>
            <person name="Thangavelu M."/>
            <person name="Johnson D."/>
            <person name="Knights A."/>
            <person name="Loulseged H."/>
            <person name="Mungall K.L."/>
            <person name="Oliver K."/>
            <person name="Price C."/>
            <person name="Quail M.A."/>
            <person name="Urushihara H."/>
            <person name="Hernandez J."/>
            <person name="Rabbinowitsch E."/>
            <person name="Steffen D."/>
            <person name="Sanders M."/>
            <person name="Ma J."/>
            <person name="Kohara Y."/>
            <person name="Sharp S."/>
            <person name="Simmonds M.N."/>
            <person name="Spiegler S."/>
            <person name="Tivey A."/>
            <person name="Sugano S."/>
            <person name="White B."/>
            <person name="Walker D."/>
            <person name="Woodward J.R."/>
            <person name="Winckler T."/>
            <person name="Tanaka Y."/>
            <person name="Shaulsky G."/>
            <person name="Schleicher M."/>
            <person name="Weinstock G.M."/>
            <person name="Rosenthal A."/>
            <person name="Cox E.C."/>
            <person name="Chisholm R.L."/>
            <person name="Gibbs R.A."/>
            <person name="Loomis W.F."/>
            <person name="Platzer M."/>
            <person name="Kay R.R."/>
            <person name="Williams J.G."/>
            <person name="Dear P.H."/>
            <person name="Noegel A.A."/>
            <person name="Barrell B.G."/>
            <person name="Kuspa A."/>
        </authorList>
    </citation>
    <scope>NUCLEOTIDE SEQUENCE [LARGE SCALE GENOMIC DNA]</scope>
    <source>
        <strain>AX4</strain>
    </source>
</reference>
<name>Y5795_DICDI</name>
<feature type="chain" id="PRO_0000368213" description="PH domain-containing protein DDB_G0275795">
    <location>
        <begin position="1"/>
        <end position="808"/>
    </location>
</feature>
<feature type="domain" description="PH" evidence="2">
    <location>
        <begin position="124"/>
        <end position="216"/>
    </location>
</feature>
<feature type="region of interest" description="Disordered" evidence="3">
    <location>
        <begin position="108"/>
        <end position="127"/>
    </location>
</feature>
<feature type="region of interest" description="Disordered" evidence="3">
    <location>
        <begin position="228"/>
        <end position="325"/>
    </location>
</feature>
<feature type="region of interest" description="Disordered" evidence="3">
    <location>
        <begin position="339"/>
        <end position="375"/>
    </location>
</feature>
<feature type="region of interest" description="Disordered" evidence="3">
    <location>
        <begin position="405"/>
        <end position="475"/>
    </location>
</feature>
<feature type="region of interest" description="Disordered" evidence="3">
    <location>
        <begin position="523"/>
        <end position="542"/>
    </location>
</feature>
<feature type="region of interest" description="Disordered" evidence="3">
    <location>
        <begin position="645"/>
        <end position="675"/>
    </location>
</feature>
<feature type="coiled-coil region" evidence="1">
    <location>
        <begin position="57"/>
        <end position="121"/>
    </location>
</feature>
<feature type="coiled-coil region" evidence="1">
    <location>
        <begin position="322"/>
        <end position="412"/>
    </location>
</feature>
<feature type="coiled-coil region" evidence="1">
    <location>
        <begin position="487"/>
        <end position="645"/>
    </location>
</feature>
<feature type="coiled-coil region" evidence="1">
    <location>
        <begin position="678"/>
        <end position="734"/>
    </location>
</feature>
<feature type="compositionally biased region" description="Polar residues" evidence="3">
    <location>
        <begin position="108"/>
        <end position="120"/>
    </location>
</feature>
<feature type="compositionally biased region" description="Low complexity" evidence="3">
    <location>
        <begin position="228"/>
        <end position="248"/>
    </location>
</feature>
<feature type="compositionally biased region" description="Polar residues" evidence="3">
    <location>
        <begin position="255"/>
        <end position="274"/>
    </location>
</feature>
<feature type="compositionally biased region" description="Low complexity" evidence="3">
    <location>
        <begin position="293"/>
        <end position="321"/>
    </location>
</feature>
<feature type="compositionally biased region" description="Basic and acidic residues" evidence="3">
    <location>
        <begin position="339"/>
        <end position="353"/>
    </location>
</feature>
<feature type="compositionally biased region" description="Low complexity" evidence="3">
    <location>
        <begin position="354"/>
        <end position="375"/>
    </location>
</feature>
<feature type="compositionally biased region" description="Low complexity" evidence="3">
    <location>
        <begin position="405"/>
        <end position="414"/>
    </location>
</feature>
<feature type="compositionally biased region" description="Polar residues" evidence="3">
    <location>
        <begin position="417"/>
        <end position="428"/>
    </location>
</feature>
<feature type="compositionally biased region" description="Low complexity" evidence="3">
    <location>
        <begin position="429"/>
        <end position="449"/>
    </location>
</feature>
<feature type="compositionally biased region" description="Polar residues" evidence="3">
    <location>
        <begin position="450"/>
        <end position="475"/>
    </location>
</feature>
<feature type="compositionally biased region" description="Basic and acidic residues" evidence="3">
    <location>
        <begin position="525"/>
        <end position="542"/>
    </location>
</feature>
<feature type="compositionally biased region" description="Low complexity" evidence="3">
    <location>
        <begin position="654"/>
        <end position="673"/>
    </location>
</feature>
<keyword id="KW-0175">Coiled coil</keyword>
<keyword id="KW-1185">Reference proteome</keyword>
<accession>Q1ZXL0</accession>
<accession>Q86H71</accession>
<dbReference type="EMBL" id="AAFI02000013">
    <property type="protein sequence ID" value="EAS66916.1"/>
    <property type="molecule type" value="Genomic_DNA"/>
</dbReference>
<dbReference type="RefSeq" id="XP_001134600.1">
    <property type="nucleotide sequence ID" value="XM_001134600.1"/>
</dbReference>
<dbReference type="SMR" id="Q1ZXL0"/>
<dbReference type="FunCoup" id="Q1ZXL0">
    <property type="interactions" value="24"/>
</dbReference>
<dbReference type="STRING" id="44689.Q1ZXL0"/>
<dbReference type="PaxDb" id="44689-DDB0231765"/>
<dbReference type="EnsemblProtists" id="EAS66916">
    <property type="protein sequence ID" value="EAS66916"/>
    <property type="gene ID" value="DDB_G0275795"/>
</dbReference>
<dbReference type="GeneID" id="8620030"/>
<dbReference type="KEGG" id="ddi:DDB_G0275795"/>
<dbReference type="dictyBase" id="DDB_G0275795">
    <property type="gene designation" value="pripA"/>
</dbReference>
<dbReference type="VEuPathDB" id="AmoebaDB:DDB_G0275795"/>
<dbReference type="eggNOG" id="ENOG502RSR6">
    <property type="taxonomic scope" value="Eukaryota"/>
</dbReference>
<dbReference type="HOGENOM" id="CLU_348984_0_0_1"/>
<dbReference type="InParanoid" id="Q1ZXL0"/>
<dbReference type="OMA" id="DTKLYYY"/>
<dbReference type="PRO" id="PR:Q1ZXL0"/>
<dbReference type="Proteomes" id="UP000002195">
    <property type="component" value="Chromosome 2"/>
</dbReference>
<dbReference type="GO" id="GO:0005829">
    <property type="term" value="C:cytosol"/>
    <property type="evidence" value="ECO:0007669"/>
    <property type="project" value="GOC"/>
</dbReference>
<dbReference type="GO" id="GO:0005769">
    <property type="term" value="C:early endosome"/>
    <property type="evidence" value="ECO:0000318"/>
    <property type="project" value="GO_Central"/>
</dbReference>
<dbReference type="GO" id="GO:0032009">
    <property type="term" value="C:early phagosome"/>
    <property type="evidence" value="ECO:0000314"/>
    <property type="project" value="dictyBase"/>
</dbReference>
<dbReference type="GO" id="GO:0044354">
    <property type="term" value="C:macropinosome"/>
    <property type="evidence" value="ECO:0000314"/>
    <property type="project" value="dictyBase"/>
</dbReference>
<dbReference type="GO" id="GO:0055037">
    <property type="term" value="C:recycling endosome"/>
    <property type="evidence" value="ECO:0000318"/>
    <property type="project" value="GO_Central"/>
</dbReference>
<dbReference type="GO" id="GO:0005802">
    <property type="term" value="C:trans-Golgi network"/>
    <property type="evidence" value="ECO:0000318"/>
    <property type="project" value="GO_Central"/>
</dbReference>
<dbReference type="GO" id="GO:0043325">
    <property type="term" value="F:phosphatidylinositol-3,4-bisphosphate binding"/>
    <property type="evidence" value="ECO:0000314"/>
    <property type="project" value="dictyBase"/>
</dbReference>
<dbReference type="GO" id="GO:0007032">
    <property type="term" value="P:endosome organization"/>
    <property type="evidence" value="ECO:0000318"/>
    <property type="project" value="GO_Central"/>
</dbReference>
<dbReference type="GO" id="GO:1905161">
    <property type="term" value="P:protein localization to phagocytic vesicle"/>
    <property type="evidence" value="ECO:0000315"/>
    <property type="project" value="dictyBase"/>
</dbReference>
<dbReference type="GO" id="GO:0001881">
    <property type="term" value="P:receptor recycling"/>
    <property type="evidence" value="ECO:0000318"/>
    <property type="project" value="GO_Central"/>
</dbReference>
<dbReference type="GO" id="GO:1905162">
    <property type="term" value="P:regulation of phagosome maturation"/>
    <property type="evidence" value="ECO:0000315"/>
    <property type="project" value="dictyBase"/>
</dbReference>
<dbReference type="GO" id="GO:0042147">
    <property type="term" value="P:retrograde transport, endosome to Golgi"/>
    <property type="evidence" value="ECO:0000318"/>
    <property type="project" value="GO_Central"/>
</dbReference>
<dbReference type="Gene3D" id="2.30.29.30">
    <property type="entry name" value="Pleckstrin-homology domain (PH domain)/Phosphotyrosine-binding domain (PTB)"/>
    <property type="match status" value="1"/>
</dbReference>
<dbReference type="InterPro" id="IPR051647">
    <property type="entry name" value="Mediator_comp_sub12"/>
</dbReference>
<dbReference type="InterPro" id="IPR033931">
    <property type="entry name" value="PDK1-typ_PH"/>
</dbReference>
<dbReference type="InterPro" id="IPR011993">
    <property type="entry name" value="PH-like_dom_sf"/>
</dbReference>
<dbReference type="InterPro" id="IPR001849">
    <property type="entry name" value="PH_domain"/>
</dbReference>
<dbReference type="PANTHER" id="PTHR46007:SF8">
    <property type="entry name" value="C2H2-TYPE DOMAIN-CONTAINING PROTEIN"/>
    <property type="match status" value="1"/>
</dbReference>
<dbReference type="PANTHER" id="PTHR46007">
    <property type="entry name" value="MEDIATOR OF RNA POLYMERASE II TRANSCRIPTION SUBUNIT 12"/>
    <property type="match status" value="1"/>
</dbReference>
<dbReference type="Pfam" id="PF14593">
    <property type="entry name" value="PH_3"/>
    <property type="match status" value="1"/>
</dbReference>
<dbReference type="SMART" id="SM00233">
    <property type="entry name" value="PH"/>
    <property type="match status" value="1"/>
</dbReference>
<dbReference type="SUPFAM" id="SSF50729">
    <property type="entry name" value="PH domain-like"/>
    <property type="match status" value="1"/>
</dbReference>
<dbReference type="PROSITE" id="PS50003">
    <property type="entry name" value="PH_DOMAIN"/>
    <property type="match status" value="1"/>
</dbReference>
<organism>
    <name type="scientific">Dictyostelium discoideum</name>
    <name type="common">Social amoeba</name>
    <dbReference type="NCBI Taxonomy" id="44689"/>
    <lineage>
        <taxon>Eukaryota</taxon>
        <taxon>Amoebozoa</taxon>
        <taxon>Evosea</taxon>
        <taxon>Eumycetozoa</taxon>
        <taxon>Dictyostelia</taxon>
        <taxon>Dictyosteliales</taxon>
        <taxon>Dictyosteliaceae</taxon>
        <taxon>Dictyostelium</taxon>
    </lineage>
</organism>
<evidence type="ECO:0000255" key="1"/>
<evidence type="ECO:0000255" key="2">
    <source>
        <dbReference type="PROSITE-ProRule" id="PRU00145"/>
    </source>
</evidence>
<evidence type="ECO:0000256" key="3">
    <source>
        <dbReference type="SAM" id="MobiDB-lite"/>
    </source>
</evidence>